<sequence>MLANPLSQFLIKPIIPLKALGYNISITNSAVAMIFVSIAASLLLIIAFVNSKLVPSRWQAFGEILYESNIKLVHSIIGPQGKVFFPLILTLFLFISLGNIIGMVPHAFTFTSHIIVTFSLAMIVFTTTLVYGIYRHKLGFFSLFLPKNIPLWLAPIMVIIELCVFISKPISLSLRLTANMVAGHILLKIIAWSIVSLTWFFKPLPIALVIVLIGFELFISILQAYIFTILSCVYLRDVVNLH</sequence>
<protein>
    <recommendedName>
        <fullName evidence="1">ATP synthase subunit a</fullName>
    </recommendedName>
    <alternativeName>
        <fullName evidence="1">ATP synthase F0 sector subunit a</fullName>
    </alternativeName>
    <alternativeName>
        <fullName evidence="1">F-ATPase subunit 6</fullName>
    </alternativeName>
</protein>
<feature type="chain" id="PRO_1000145296" description="ATP synthase subunit a">
    <location>
        <begin position="1"/>
        <end position="242"/>
    </location>
</feature>
<feature type="transmembrane region" description="Helical" evidence="1">
    <location>
        <begin position="29"/>
        <end position="49"/>
    </location>
</feature>
<feature type="transmembrane region" description="Helical" evidence="1">
    <location>
        <begin position="83"/>
        <end position="103"/>
    </location>
</feature>
<feature type="transmembrane region" description="Helical" evidence="1">
    <location>
        <begin position="114"/>
        <end position="134"/>
    </location>
</feature>
<feature type="transmembrane region" description="Helical" evidence="1">
    <location>
        <begin position="140"/>
        <end position="160"/>
    </location>
</feature>
<feature type="transmembrane region" description="Helical" evidence="1">
    <location>
        <begin position="181"/>
        <end position="201"/>
    </location>
</feature>
<feature type="transmembrane region" description="Helical" evidence="1">
    <location>
        <begin position="206"/>
        <end position="226"/>
    </location>
</feature>
<dbReference type="EMBL" id="AM494475">
    <property type="protein sequence ID" value="CAM79837.1"/>
    <property type="molecule type" value="Genomic_DNA"/>
</dbReference>
<dbReference type="RefSeq" id="WP_011944644.1">
    <property type="nucleotide sequence ID" value="NC_009488.1"/>
</dbReference>
<dbReference type="SMR" id="A5CDC5"/>
<dbReference type="KEGG" id="ots:OTBS_0771"/>
<dbReference type="eggNOG" id="COG0356">
    <property type="taxonomic scope" value="Bacteria"/>
</dbReference>
<dbReference type="HOGENOM" id="CLU_041018_0_2_5"/>
<dbReference type="Proteomes" id="UP000001565">
    <property type="component" value="Chromosome"/>
</dbReference>
<dbReference type="GO" id="GO:0005886">
    <property type="term" value="C:plasma membrane"/>
    <property type="evidence" value="ECO:0007669"/>
    <property type="project" value="UniProtKB-SubCell"/>
</dbReference>
<dbReference type="GO" id="GO:0045259">
    <property type="term" value="C:proton-transporting ATP synthase complex"/>
    <property type="evidence" value="ECO:0007669"/>
    <property type="project" value="UniProtKB-KW"/>
</dbReference>
<dbReference type="GO" id="GO:0046933">
    <property type="term" value="F:proton-transporting ATP synthase activity, rotational mechanism"/>
    <property type="evidence" value="ECO:0007669"/>
    <property type="project" value="UniProtKB-UniRule"/>
</dbReference>
<dbReference type="CDD" id="cd00310">
    <property type="entry name" value="ATP-synt_Fo_a_6"/>
    <property type="match status" value="1"/>
</dbReference>
<dbReference type="Gene3D" id="1.20.120.220">
    <property type="entry name" value="ATP synthase, F0 complex, subunit A"/>
    <property type="match status" value="1"/>
</dbReference>
<dbReference type="HAMAP" id="MF_01393">
    <property type="entry name" value="ATP_synth_a_bact"/>
    <property type="match status" value="1"/>
</dbReference>
<dbReference type="InterPro" id="IPR000568">
    <property type="entry name" value="ATP_synth_F0_asu"/>
</dbReference>
<dbReference type="InterPro" id="IPR023011">
    <property type="entry name" value="ATP_synth_F0_asu_AS"/>
</dbReference>
<dbReference type="InterPro" id="IPR045083">
    <property type="entry name" value="ATP_synth_F0_asu_bact/mt"/>
</dbReference>
<dbReference type="InterPro" id="IPR035908">
    <property type="entry name" value="F0_ATP_A_sf"/>
</dbReference>
<dbReference type="NCBIfam" id="TIGR01131">
    <property type="entry name" value="ATP_synt_6_or_A"/>
    <property type="match status" value="1"/>
</dbReference>
<dbReference type="NCBIfam" id="NF004482">
    <property type="entry name" value="PRK05815.2-4"/>
    <property type="match status" value="1"/>
</dbReference>
<dbReference type="PANTHER" id="PTHR11410">
    <property type="entry name" value="ATP SYNTHASE SUBUNIT A"/>
    <property type="match status" value="1"/>
</dbReference>
<dbReference type="PANTHER" id="PTHR11410:SF0">
    <property type="entry name" value="ATP SYNTHASE SUBUNIT A"/>
    <property type="match status" value="1"/>
</dbReference>
<dbReference type="Pfam" id="PF00119">
    <property type="entry name" value="ATP-synt_A"/>
    <property type="match status" value="1"/>
</dbReference>
<dbReference type="PRINTS" id="PR00123">
    <property type="entry name" value="ATPASEA"/>
</dbReference>
<dbReference type="SUPFAM" id="SSF81336">
    <property type="entry name" value="F1F0 ATP synthase subunit A"/>
    <property type="match status" value="1"/>
</dbReference>
<dbReference type="PROSITE" id="PS00449">
    <property type="entry name" value="ATPASE_A"/>
    <property type="match status" value="1"/>
</dbReference>
<gene>
    <name evidence="1" type="primary">atpB</name>
    <name type="ordered locus">OTBS_0771</name>
</gene>
<name>ATP6_ORITB</name>
<accession>A5CDC5</accession>
<proteinExistence type="inferred from homology"/>
<evidence type="ECO:0000255" key="1">
    <source>
        <dbReference type="HAMAP-Rule" id="MF_01393"/>
    </source>
</evidence>
<organism>
    <name type="scientific">Orientia tsutsugamushi (strain Boryong)</name>
    <name type="common">Rickettsia tsutsugamushi</name>
    <dbReference type="NCBI Taxonomy" id="357244"/>
    <lineage>
        <taxon>Bacteria</taxon>
        <taxon>Pseudomonadati</taxon>
        <taxon>Pseudomonadota</taxon>
        <taxon>Alphaproteobacteria</taxon>
        <taxon>Rickettsiales</taxon>
        <taxon>Rickettsiaceae</taxon>
        <taxon>Rickettsieae</taxon>
        <taxon>Orientia</taxon>
    </lineage>
</organism>
<reference key="1">
    <citation type="journal article" date="2007" name="Proc. Natl. Acad. Sci. U.S.A.">
        <title>The Orientia tsutsugamushi genome reveals massive proliferation of conjugative type IV secretion system and host-cell interaction genes.</title>
        <authorList>
            <person name="Cho N.-H."/>
            <person name="Kim H.-R."/>
            <person name="Lee J.-H."/>
            <person name="Kim S.-Y."/>
            <person name="Kim J."/>
            <person name="Cha S."/>
            <person name="Kim S.-Y."/>
            <person name="Darby A.C."/>
            <person name="Fuxelius H.-H."/>
            <person name="Yin J."/>
            <person name="Kim J.H."/>
            <person name="Kim J."/>
            <person name="Lee S.J."/>
            <person name="Koh Y.-S."/>
            <person name="Jang W.-J."/>
            <person name="Park K.-H."/>
            <person name="Andersson S.G.E."/>
            <person name="Choi M.-S."/>
            <person name="Kim I.-S."/>
        </authorList>
    </citation>
    <scope>NUCLEOTIDE SEQUENCE [LARGE SCALE GENOMIC DNA]</scope>
    <source>
        <strain>Boryong</strain>
    </source>
</reference>
<keyword id="KW-0066">ATP synthesis</keyword>
<keyword id="KW-0997">Cell inner membrane</keyword>
<keyword id="KW-1003">Cell membrane</keyword>
<keyword id="KW-0138">CF(0)</keyword>
<keyword id="KW-0375">Hydrogen ion transport</keyword>
<keyword id="KW-0406">Ion transport</keyword>
<keyword id="KW-0472">Membrane</keyword>
<keyword id="KW-1185">Reference proteome</keyword>
<keyword id="KW-0812">Transmembrane</keyword>
<keyword id="KW-1133">Transmembrane helix</keyword>
<keyword id="KW-0813">Transport</keyword>
<comment type="function">
    <text evidence="1">Key component of the proton channel; it plays a direct role in the translocation of protons across the membrane.</text>
</comment>
<comment type="subunit">
    <text evidence="1">F-type ATPases have 2 components, CF(1) - the catalytic core - and CF(0) - the membrane proton channel. CF(1) has five subunits: alpha(3), beta(3), gamma(1), delta(1), epsilon(1). CF(0) has three main subunits: a(1), b(2) and c(9-12). The alpha and beta chains form an alternating ring which encloses part of the gamma chain. CF(1) is attached to CF(0) by a central stalk formed by the gamma and epsilon chains, while a peripheral stalk is formed by the delta and b chains.</text>
</comment>
<comment type="subcellular location">
    <subcellularLocation>
        <location evidence="1">Cell inner membrane</location>
        <topology evidence="1">Multi-pass membrane protein</topology>
    </subcellularLocation>
</comment>
<comment type="similarity">
    <text evidence="1">Belongs to the ATPase A chain family.</text>
</comment>